<accession>P03413</accession>
<evidence type="ECO:0000256" key="1">
    <source>
        <dbReference type="SAM" id="MobiDB-lite"/>
    </source>
</evidence>
<organism>
    <name type="scientific">Bovine leukemia virus (isolate Japanese BLV-1)</name>
    <name type="common">BLV</name>
    <dbReference type="NCBI Taxonomy" id="11907"/>
    <lineage>
        <taxon>Viruses</taxon>
        <taxon>Riboviria</taxon>
        <taxon>Pararnavirae</taxon>
        <taxon>Artverviricota</taxon>
        <taxon>Revtraviricetes</taxon>
        <taxon>Ortervirales</taxon>
        <taxon>Retroviridae</taxon>
        <taxon>Orthoretrovirinae</taxon>
        <taxon>Deltaretrovirus</taxon>
        <taxon>Bovine leukemia virus</taxon>
    </lineage>
</organism>
<feature type="chain" id="PRO_0000125507" description="Putative uncharacterized protein PXBL-II">
    <location>
        <begin position="1" status="less than"/>
        <end position="148"/>
    </location>
</feature>
<feature type="region of interest" description="Disordered" evidence="1">
    <location>
        <begin position="36"/>
        <end position="148"/>
    </location>
</feature>
<feature type="compositionally biased region" description="Low complexity" evidence="1">
    <location>
        <begin position="36"/>
        <end position="45"/>
    </location>
</feature>
<feature type="compositionally biased region" description="Polar residues" evidence="1">
    <location>
        <begin position="46"/>
        <end position="55"/>
    </location>
</feature>
<feature type="non-terminal residue">
    <location>
        <position position="1"/>
    </location>
</feature>
<sequence>RQNYFLSFKQVLLVGGPTLYMPARPWFCPMMSPSMPGAPSAGPMSDSNSKGSTPRSPARPTVSTGPPMDDLAASMERCSLDCMSPRPAPKGPDDSGSTAPFRPFALSPARFHFPPSSGPPSSPTNANCPRPLATVAPLSGTAFFPGTT</sequence>
<name>YPX2_BLVJ</name>
<proteinExistence type="predicted"/>
<reference key="1">
    <citation type="journal article" date="1985" name="Proc. Natl. Acad. Sci. U.S.A.">
        <title>Complete nucleotide sequence of the genome of bovine leukemia virus: its evolutionary relationship to other retroviruses.</title>
        <authorList>
            <person name="Sagata N."/>
            <person name="Yasunaga T."/>
            <person name="Tsuzuku-Kawamura J."/>
            <person name="Ohishi K."/>
            <person name="Ogawa Y."/>
            <person name="Ikawa Y."/>
        </authorList>
    </citation>
    <scope>NUCLEOTIDE SEQUENCE [GENOMIC RNA]</scope>
</reference>
<protein>
    <recommendedName>
        <fullName>Putative uncharacterized protein PXBL-II</fullName>
    </recommendedName>
</protein>
<dbReference type="EMBL" id="K02120">
    <property type="status" value="NOT_ANNOTATED_CDS"/>
    <property type="molecule type" value="Genomic_RNA"/>
</dbReference>
<dbReference type="PIR" id="A04015">
    <property type="entry name" value="QQLJX2"/>
</dbReference>
<organismHost>
    <name type="scientific">Bos taurus</name>
    <name type="common">Bovine</name>
    <dbReference type="NCBI Taxonomy" id="9913"/>
</organismHost>